<dbReference type="EC" id="2.7.4.9" evidence="1"/>
<dbReference type="EMBL" id="CP000267">
    <property type="protein sequence ID" value="ABD69977.1"/>
    <property type="molecule type" value="Genomic_DNA"/>
</dbReference>
<dbReference type="RefSeq" id="WP_011464545.1">
    <property type="nucleotide sequence ID" value="NC_007908.1"/>
</dbReference>
<dbReference type="SMR" id="Q21W76"/>
<dbReference type="STRING" id="338969.Rfer_2255"/>
<dbReference type="KEGG" id="rfr:Rfer_2255"/>
<dbReference type="eggNOG" id="COG0125">
    <property type="taxonomic scope" value="Bacteria"/>
</dbReference>
<dbReference type="HOGENOM" id="CLU_049131_0_2_4"/>
<dbReference type="OrthoDB" id="9774907at2"/>
<dbReference type="Proteomes" id="UP000008332">
    <property type="component" value="Chromosome"/>
</dbReference>
<dbReference type="GO" id="GO:0005829">
    <property type="term" value="C:cytosol"/>
    <property type="evidence" value="ECO:0007669"/>
    <property type="project" value="TreeGrafter"/>
</dbReference>
<dbReference type="GO" id="GO:0005524">
    <property type="term" value="F:ATP binding"/>
    <property type="evidence" value="ECO:0007669"/>
    <property type="project" value="UniProtKB-UniRule"/>
</dbReference>
<dbReference type="GO" id="GO:0004798">
    <property type="term" value="F:dTMP kinase activity"/>
    <property type="evidence" value="ECO:0007669"/>
    <property type="project" value="UniProtKB-UniRule"/>
</dbReference>
<dbReference type="GO" id="GO:0006233">
    <property type="term" value="P:dTDP biosynthetic process"/>
    <property type="evidence" value="ECO:0007669"/>
    <property type="project" value="InterPro"/>
</dbReference>
<dbReference type="GO" id="GO:0006235">
    <property type="term" value="P:dTTP biosynthetic process"/>
    <property type="evidence" value="ECO:0007669"/>
    <property type="project" value="UniProtKB-UniRule"/>
</dbReference>
<dbReference type="GO" id="GO:0006227">
    <property type="term" value="P:dUDP biosynthetic process"/>
    <property type="evidence" value="ECO:0007669"/>
    <property type="project" value="TreeGrafter"/>
</dbReference>
<dbReference type="CDD" id="cd01672">
    <property type="entry name" value="TMPK"/>
    <property type="match status" value="1"/>
</dbReference>
<dbReference type="FunFam" id="3.40.50.300:FF:000225">
    <property type="entry name" value="Thymidylate kinase"/>
    <property type="match status" value="1"/>
</dbReference>
<dbReference type="Gene3D" id="3.40.50.300">
    <property type="entry name" value="P-loop containing nucleotide triphosphate hydrolases"/>
    <property type="match status" value="1"/>
</dbReference>
<dbReference type="HAMAP" id="MF_00165">
    <property type="entry name" value="Thymidylate_kinase"/>
    <property type="match status" value="1"/>
</dbReference>
<dbReference type="InterPro" id="IPR027417">
    <property type="entry name" value="P-loop_NTPase"/>
</dbReference>
<dbReference type="InterPro" id="IPR039430">
    <property type="entry name" value="Thymidylate_kin-like_dom"/>
</dbReference>
<dbReference type="InterPro" id="IPR018094">
    <property type="entry name" value="Thymidylate_kinase"/>
</dbReference>
<dbReference type="NCBIfam" id="TIGR00041">
    <property type="entry name" value="DTMP_kinase"/>
    <property type="match status" value="1"/>
</dbReference>
<dbReference type="PANTHER" id="PTHR10344">
    <property type="entry name" value="THYMIDYLATE KINASE"/>
    <property type="match status" value="1"/>
</dbReference>
<dbReference type="PANTHER" id="PTHR10344:SF4">
    <property type="entry name" value="UMP-CMP KINASE 2, MITOCHONDRIAL"/>
    <property type="match status" value="1"/>
</dbReference>
<dbReference type="Pfam" id="PF02223">
    <property type="entry name" value="Thymidylate_kin"/>
    <property type="match status" value="1"/>
</dbReference>
<dbReference type="SUPFAM" id="SSF52540">
    <property type="entry name" value="P-loop containing nucleoside triphosphate hydrolases"/>
    <property type="match status" value="1"/>
</dbReference>
<reference key="1">
    <citation type="submission" date="2006-02" db="EMBL/GenBank/DDBJ databases">
        <title>Complete sequence of chromosome of Rhodoferax ferrireducens DSM 15236.</title>
        <authorList>
            <person name="Copeland A."/>
            <person name="Lucas S."/>
            <person name="Lapidus A."/>
            <person name="Barry K."/>
            <person name="Detter J.C."/>
            <person name="Glavina del Rio T."/>
            <person name="Hammon N."/>
            <person name="Israni S."/>
            <person name="Pitluck S."/>
            <person name="Brettin T."/>
            <person name="Bruce D."/>
            <person name="Han C."/>
            <person name="Tapia R."/>
            <person name="Gilna P."/>
            <person name="Kiss H."/>
            <person name="Schmutz J."/>
            <person name="Larimer F."/>
            <person name="Land M."/>
            <person name="Kyrpides N."/>
            <person name="Ivanova N."/>
            <person name="Richardson P."/>
        </authorList>
    </citation>
    <scope>NUCLEOTIDE SEQUENCE [LARGE SCALE GENOMIC DNA]</scope>
    <source>
        <strain>ATCC BAA-621 / DSM 15236 / T118</strain>
    </source>
</reference>
<organism>
    <name type="scientific">Albidiferax ferrireducens (strain ATCC BAA-621 / DSM 15236 / T118)</name>
    <name type="common">Rhodoferax ferrireducens</name>
    <dbReference type="NCBI Taxonomy" id="338969"/>
    <lineage>
        <taxon>Bacteria</taxon>
        <taxon>Pseudomonadati</taxon>
        <taxon>Pseudomonadota</taxon>
        <taxon>Betaproteobacteria</taxon>
        <taxon>Burkholderiales</taxon>
        <taxon>Comamonadaceae</taxon>
        <taxon>Rhodoferax</taxon>
    </lineage>
</organism>
<keyword id="KW-0067">ATP-binding</keyword>
<keyword id="KW-0418">Kinase</keyword>
<keyword id="KW-0545">Nucleotide biosynthesis</keyword>
<keyword id="KW-0547">Nucleotide-binding</keyword>
<keyword id="KW-1185">Reference proteome</keyword>
<keyword id="KW-0808">Transferase</keyword>
<accession>Q21W76</accession>
<evidence type="ECO:0000255" key="1">
    <source>
        <dbReference type="HAMAP-Rule" id="MF_00165"/>
    </source>
</evidence>
<name>KTHY_ALBFT</name>
<comment type="function">
    <text evidence="1">Phosphorylation of dTMP to form dTDP in both de novo and salvage pathways of dTTP synthesis.</text>
</comment>
<comment type="catalytic activity">
    <reaction evidence="1">
        <text>dTMP + ATP = dTDP + ADP</text>
        <dbReference type="Rhea" id="RHEA:13517"/>
        <dbReference type="ChEBI" id="CHEBI:30616"/>
        <dbReference type="ChEBI" id="CHEBI:58369"/>
        <dbReference type="ChEBI" id="CHEBI:63528"/>
        <dbReference type="ChEBI" id="CHEBI:456216"/>
        <dbReference type="EC" id="2.7.4.9"/>
    </reaction>
</comment>
<comment type="similarity">
    <text evidence="1">Belongs to the thymidylate kinase family.</text>
</comment>
<sequence>MTTEGIFISFEGIDGAGKSTHIDALAQAFRAQGRAVTLTREPGGTPLAEKLRVLVLNDAMDAMTEALLVFAARRDHLQQLIEPALARGDVVLCDRFTDATFAYQGAGRGFDLKILSFLERTVQSIQGLEPDFIRNPDLTVWFDLAAAIAAQRLAGARSPDKFEAQPVEFFRRVSDGYLNRMTACPSRFARIEANQTREAVWQDVLHAVQARGWLT</sequence>
<gene>
    <name evidence="1" type="primary">tmk</name>
    <name type="ordered locus">Rfer_2255</name>
</gene>
<feature type="chain" id="PRO_1000023263" description="Thymidylate kinase">
    <location>
        <begin position="1"/>
        <end position="215"/>
    </location>
</feature>
<feature type="binding site" evidence="1">
    <location>
        <begin position="12"/>
        <end position="19"/>
    </location>
    <ligand>
        <name>ATP</name>
        <dbReference type="ChEBI" id="CHEBI:30616"/>
    </ligand>
</feature>
<proteinExistence type="inferred from homology"/>
<protein>
    <recommendedName>
        <fullName evidence="1">Thymidylate kinase</fullName>
        <ecNumber evidence="1">2.7.4.9</ecNumber>
    </recommendedName>
    <alternativeName>
        <fullName evidence="1">dTMP kinase</fullName>
    </alternativeName>
</protein>